<protein>
    <recommendedName>
        <fullName>Pyruvate kinase</fullName>
        <shortName>PK</shortName>
        <ecNumber>2.7.1.40</ecNumber>
    </recommendedName>
</protein>
<dbReference type="EC" id="2.7.1.40"/>
<dbReference type="EMBL" id="CP000029">
    <property type="protein sequence ID" value="AAW54633.1"/>
    <property type="molecule type" value="Genomic_DNA"/>
</dbReference>
<dbReference type="RefSeq" id="WP_001830831.1">
    <property type="nucleotide sequence ID" value="NC_002976.3"/>
</dbReference>
<dbReference type="SMR" id="Q5HNK7"/>
<dbReference type="STRING" id="176279.SERP1261"/>
<dbReference type="GeneID" id="50018513"/>
<dbReference type="KEGG" id="ser:SERP1261"/>
<dbReference type="eggNOG" id="COG0469">
    <property type="taxonomic scope" value="Bacteria"/>
</dbReference>
<dbReference type="HOGENOM" id="CLU_015439_0_2_9"/>
<dbReference type="UniPathway" id="UPA00109">
    <property type="reaction ID" value="UER00188"/>
</dbReference>
<dbReference type="Proteomes" id="UP000000531">
    <property type="component" value="Chromosome"/>
</dbReference>
<dbReference type="GO" id="GO:0005524">
    <property type="term" value="F:ATP binding"/>
    <property type="evidence" value="ECO:0007669"/>
    <property type="project" value="UniProtKB-KW"/>
</dbReference>
<dbReference type="GO" id="GO:0016301">
    <property type="term" value="F:kinase activity"/>
    <property type="evidence" value="ECO:0007669"/>
    <property type="project" value="UniProtKB-KW"/>
</dbReference>
<dbReference type="GO" id="GO:0000287">
    <property type="term" value="F:magnesium ion binding"/>
    <property type="evidence" value="ECO:0007669"/>
    <property type="project" value="InterPro"/>
</dbReference>
<dbReference type="GO" id="GO:0030955">
    <property type="term" value="F:potassium ion binding"/>
    <property type="evidence" value="ECO:0007669"/>
    <property type="project" value="InterPro"/>
</dbReference>
<dbReference type="GO" id="GO:0004743">
    <property type="term" value="F:pyruvate kinase activity"/>
    <property type="evidence" value="ECO:0007669"/>
    <property type="project" value="UniProtKB-EC"/>
</dbReference>
<dbReference type="FunFam" id="2.40.33.10:FF:000001">
    <property type="entry name" value="Pyruvate kinase"/>
    <property type="match status" value="1"/>
</dbReference>
<dbReference type="FunFam" id="3.20.20.60:FF:000001">
    <property type="entry name" value="Pyruvate kinase"/>
    <property type="match status" value="1"/>
</dbReference>
<dbReference type="FunFam" id="3.40.1380.20:FF:000017">
    <property type="entry name" value="Pyruvate kinase"/>
    <property type="match status" value="1"/>
</dbReference>
<dbReference type="Gene3D" id="3.20.20.60">
    <property type="entry name" value="Phosphoenolpyruvate-binding domains"/>
    <property type="match status" value="1"/>
</dbReference>
<dbReference type="Gene3D" id="3.50.30.10">
    <property type="entry name" value="Phosphohistidine domain"/>
    <property type="match status" value="1"/>
</dbReference>
<dbReference type="Gene3D" id="2.40.33.10">
    <property type="entry name" value="PK beta-barrel domain-like"/>
    <property type="match status" value="1"/>
</dbReference>
<dbReference type="Gene3D" id="3.40.1380.20">
    <property type="entry name" value="Pyruvate kinase, C-terminal domain"/>
    <property type="match status" value="1"/>
</dbReference>
<dbReference type="InterPro" id="IPR008279">
    <property type="entry name" value="PEP-util_enz_mobile_dom"/>
</dbReference>
<dbReference type="InterPro" id="IPR036637">
    <property type="entry name" value="Phosphohistidine_dom_sf"/>
</dbReference>
<dbReference type="InterPro" id="IPR001697">
    <property type="entry name" value="Pyr_Knase"/>
</dbReference>
<dbReference type="InterPro" id="IPR015813">
    <property type="entry name" value="Pyrv/PenolPyrv_kinase-like_dom"/>
</dbReference>
<dbReference type="InterPro" id="IPR040442">
    <property type="entry name" value="Pyrv_kinase-like_dom_sf"/>
</dbReference>
<dbReference type="InterPro" id="IPR011037">
    <property type="entry name" value="Pyrv_Knase-like_insert_dom_sf"/>
</dbReference>
<dbReference type="InterPro" id="IPR015793">
    <property type="entry name" value="Pyrv_Knase_brl"/>
</dbReference>
<dbReference type="InterPro" id="IPR015795">
    <property type="entry name" value="Pyrv_Knase_C"/>
</dbReference>
<dbReference type="InterPro" id="IPR036918">
    <property type="entry name" value="Pyrv_Knase_C_sf"/>
</dbReference>
<dbReference type="InterPro" id="IPR015806">
    <property type="entry name" value="Pyrv_Knase_insert_dom_sf"/>
</dbReference>
<dbReference type="NCBIfam" id="NF004491">
    <property type="entry name" value="PRK05826.1"/>
    <property type="match status" value="1"/>
</dbReference>
<dbReference type="NCBIfam" id="NF004978">
    <property type="entry name" value="PRK06354.1"/>
    <property type="match status" value="1"/>
</dbReference>
<dbReference type="NCBIfam" id="TIGR01064">
    <property type="entry name" value="pyruv_kin"/>
    <property type="match status" value="1"/>
</dbReference>
<dbReference type="PANTHER" id="PTHR11817">
    <property type="entry name" value="PYRUVATE KINASE"/>
    <property type="match status" value="1"/>
</dbReference>
<dbReference type="Pfam" id="PF00391">
    <property type="entry name" value="PEP-utilizers"/>
    <property type="match status" value="1"/>
</dbReference>
<dbReference type="Pfam" id="PF00224">
    <property type="entry name" value="PK"/>
    <property type="match status" value="1"/>
</dbReference>
<dbReference type="Pfam" id="PF02887">
    <property type="entry name" value="PK_C"/>
    <property type="match status" value="1"/>
</dbReference>
<dbReference type="PRINTS" id="PR01050">
    <property type="entry name" value="PYRUVTKNASE"/>
</dbReference>
<dbReference type="SUPFAM" id="SSF51621">
    <property type="entry name" value="Phosphoenolpyruvate/pyruvate domain"/>
    <property type="match status" value="1"/>
</dbReference>
<dbReference type="SUPFAM" id="SSF52009">
    <property type="entry name" value="Phosphohistidine domain"/>
    <property type="match status" value="1"/>
</dbReference>
<dbReference type="SUPFAM" id="SSF50800">
    <property type="entry name" value="PK beta-barrel domain-like"/>
    <property type="match status" value="1"/>
</dbReference>
<dbReference type="SUPFAM" id="SSF52935">
    <property type="entry name" value="PK C-terminal domain-like"/>
    <property type="match status" value="1"/>
</dbReference>
<gene>
    <name type="primary">pyk</name>
    <name type="ordered locus">SERP1261</name>
</gene>
<evidence type="ECO:0000250" key="1"/>
<evidence type="ECO:0000250" key="2">
    <source>
        <dbReference type="UniProtKB" id="P14618"/>
    </source>
</evidence>
<evidence type="ECO:0000305" key="3"/>
<accession>Q5HNK7</accession>
<comment type="catalytic activity">
    <reaction>
        <text>pyruvate + ATP = phosphoenolpyruvate + ADP + H(+)</text>
        <dbReference type="Rhea" id="RHEA:18157"/>
        <dbReference type="ChEBI" id="CHEBI:15361"/>
        <dbReference type="ChEBI" id="CHEBI:15378"/>
        <dbReference type="ChEBI" id="CHEBI:30616"/>
        <dbReference type="ChEBI" id="CHEBI:58702"/>
        <dbReference type="ChEBI" id="CHEBI:456216"/>
        <dbReference type="EC" id="2.7.1.40"/>
    </reaction>
</comment>
<comment type="cofactor">
    <cofactor evidence="1">
        <name>Mg(2+)</name>
        <dbReference type="ChEBI" id="CHEBI:18420"/>
    </cofactor>
</comment>
<comment type="cofactor">
    <cofactor evidence="1">
        <name>K(+)</name>
        <dbReference type="ChEBI" id="CHEBI:29103"/>
    </cofactor>
</comment>
<comment type="pathway">
    <text>Carbohydrate degradation; glycolysis; pyruvate from D-glyceraldehyde 3-phosphate: step 5/5.</text>
</comment>
<comment type="similarity">
    <text evidence="3">Belongs to the pyruvate kinase family.</text>
</comment>
<comment type="similarity">
    <text evidence="3">In the C-terminal section; belongs to the PEP-utilizing enzyme family.</text>
</comment>
<feature type="chain" id="PRO_0000294138" description="Pyruvate kinase">
    <location>
        <begin position="1"/>
        <end position="585"/>
    </location>
</feature>
<feature type="binding site" evidence="1">
    <location>
        <position position="32"/>
    </location>
    <ligand>
        <name>substrate</name>
    </ligand>
</feature>
<feature type="binding site" evidence="2">
    <location>
        <begin position="34"/>
        <end position="37"/>
    </location>
    <ligand>
        <name>ATP</name>
        <dbReference type="ChEBI" id="CHEBI:30616"/>
    </ligand>
</feature>
<feature type="binding site" evidence="1">
    <location>
        <position position="34"/>
    </location>
    <ligand>
        <name>K(+)</name>
        <dbReference type="ChEBI" id="CHEBI:29103"/>
    </ligand>
</feature>
<feature type="binding site" evidence="1">
    <location>
        <position position="36"/>
    </location>
    <ligand>
        <name>K(+)</name>
        <dbReference type="ChEBI" id="CHEBI:29103"/>
    </ligand>
</feature>
<feature type="binding site" evidence="1">
    <location>
        <position position="66"/>
    </location>
    <ligand>
        <name>K(+)</name>
        <dbReference type="ChEBI" id="CHEBI:29103"/>
    </ligand>
</feature>
<feature type="binding site" evidence="1">
    <location>
        <position position="67"/>
    </location>
    <ligand>
        <name>K(+)</name>
        <dbReference type="ChEBI" id="CHEBI:29103"/>
    </ligand>
</feature>
<feature type="binding site" evidence="2">
    <location>
        <position position="73"/>
    </location>
    <ligand>
        <name>ATP</name>
        <dbReference type="ChEBI" id="CHEBI:30616"/>
    </ligand>
</feature>
<feature type="binding site" evidence="2">
    <location>
        <position position="156"/>
    </location>
    <ligand>
        <name>ATP</name>
        <dbReference type="ChEBI" id="CHEBI:30616"/>
    </ligand>
</feature>
<feature type="binding site" evidence="1">
    <location>
        <position position="221"/>
    </location>
    <ligand>
        <name>Mg(2+)</name>
        <dbReference type="ChEBI" id="CHEBI:18420"/>
    </ligand>
</feature>
<feature type="binding site" evidence="1">
    <location>
        <position position="244"/>
    </location>
    <ligand>
        <name>substrate</name>
    </ligand>
</feature>
<feature type="binding site" evidence="1">
    <location>
        <position position="245"/>
    </location>
    <ligand>
        <name>Mg(2+)</name>
        <dbReference type="ChEBI" id="CHEBI:18420"/>
    </ligand>
</feature>
<feature type="binding site" evidence="1">
    <location>
        <position position="245"/>
    </location>
    <ligand>
        <name>substrate</name>
    </ligand>
</feature>
<feature type="binding site" evidence="1">
    <location>
        <position position="277"/>
    </location>
    <ligand>
        <name>substrate</name>
    </ligand>
</feature>
<feature type="site" description="Transition state stabilizer" evidence="1">
    <location>
        <position position="219"/>
    </location>
</feature>
<proteinExistence type="inferred from homology"/>
<name>KPYK_STAEQ</name>
<sequence>MRKTKIVCTIGPASESEEMLEKLMNAGMNVARLNFSHGSHEEHKARIDTIRKVAKRLNKTIGLLLDTKGPEIRTHNMKDGLIVLEKGKEVIVSMNEVEGTPEKFSVTYENLINDVNIGSYILLDDGLVELQVKEINKDKGEVKCDILNTGELKNKKGVNLPGVKVNLPGITDKDADDIRFGIKENVDFIAASFVRRPSDVLDIRQILEEEKAEITIFPKIENQEGIDNIEEILEVSDGLMVARGDMGVEIPPESVPMVQKDLIRKCNKLGKPVITATQMLDSMQRNPRATRAEASDVANAIYDGTDAVMLSGETAAGQYPEEAVKTMRNIAVSAEAAQDYKKLLSDRTKLVETSLVNAIGVSVAHTALNLNVKAIVAATESGSTARTISKYRPHSDIIAVTPSEKTARQCAIVWGVNPVVKEGRKTTDALLNNAVATAVETGRVSNGDLIIITAGVPTGEKGTTNMMKIHLVGDEIAKGQGVGRGSVVGHAIVADSASDLEGKDLSDKVIITNSVDETLVPYVEKAIGLITEENGITSPSAIIGLEKGIPTVVGVEQATKEIKNDMLVTLDASQGKVFEGYANVL</sequence>
<reference key="1">
    <citation type="journal article" date="2005" name="J. Bacteriol.">
        <title>Insights on evolution of virulence and resistance from the complete genome analysis of an early methicillin-resistant Staphylococcus aureus strain and a biofilm-producing methicillin-resistant Staphylococcus epidermidis strain.</title>
        <authorList>
            <person name="Gill S.R."/>
            <person name="Fouts D.E."/>
            <person name="Archer G.L."/>
            <person name="Mongodin E.F."/>
            <person name="DeBoy R.T."/>
            <person name="Ravel J."/>
            <person name="Paulsen I.T."/>
            <person name="Kolonay J.F."/>
            <person name="Brinkac L.M."/>
            <person name="Beanan M.J."/>
            <person name="Dodson R.J."/>
            <person name="Daugherty S.C."/>
            <person name="Madupu R."/>
            <person name="Angiuoli S.V."/>
            <person name="Durkin A.S."/>
            <person name="Haft D.H."/>
            <person name="Vamathevan J.J."/>
            <person name="Khouri H."/>
            <person name="Utterback T.R."/>
            <person name="Lee C."/>
            <person name="Dimitrov G."/>
            <person name="Jiang L."/>
            <person name="Qin H."/>
            <person name="Weidman J."/>
            <person name="Tran K."/>
            <person name="Kang K.H."/>
            <person name="Hance I.R."/>
            <person name="Nelson K.E."/>
            <person name="Fraser C.M."/>
        </authorList>
    </citation>
    <scope>NUCLEOTIDE SEQUENCE [LARGE SCALE GENOMIC DNA]</scope>
    <source>
        <strain>ATCC 35984 / DSM 28319 / BCRC 17069 / CCUG 31568 / BM 3577 / RP62A</strain>
    </source>
</reference>
<keyword id="KW-0067">ATP-binding</keyword>
<keyword id="KW-0324">Glycolysis</keyword>
<keyword id="KW-0418">Kinase</keyword>
<keyword id="KW-0460">Magnesium</keyword>
<keyword id="KW-0479">Metal-binding</keyword>
<keyword id="KW-0547">Nucleotide-binding</keyword>
<keyword id="KW-0630">Potassium</keyword>
<keyword id="KW-0670">Pyruvate</keyword>
<keyword id="KW-1185">Reference proteome</keyword>
<keyword id="KW-0808">Transferase</keyword>
<organism>
    <name type="scientific">Staphylococcus epidermidis (strain ATCC 35984 / DSM 28319 / BCRC 17069 / CCUG 31568 / BM 3577 / RP62A)</name>
    <dbReference type="NCBI Taxonomy" id="176279"/>
    <lineage>
        <taxon>Bacteria</taxon>
        <taxon>Bacillati</taxon>
        <taxon>Bacillota</taxon>
        <taxon>Bacilli</taxon>
        <taxon>Bacillales</taxon>
        <taxon>Staphylococcaceae</taxon>
        <taxon>Staphylococcus</taxon>
    </lineage>
</organism>